<sequence>MPRSLKKGPFIDLHLLKKVEKAVESGDKKPLRTWSRRSTIFPNMIGLTIAVHNGRQHVPVFVSDEMVGHKLGEFAPTRTYRGHAADKKAKKK</sequence>
<comment type="function">
    <text evidence="2">Protein S19 forms a complex with S13 that binds strongly to the 16S ribosomal RNA.</text>
</comment>
<comment type="similarity">
    <text evidence="2">Belongs to the universal ribosomal protein uS19 family.</text>
</comment>
<proteinExistence type="inferred from homology"/>
<feature type="initiator methionine" description="Removed" evidence="1">
    <location>
        <position position="1"/>
    </location>
</feature>
<feature type="chain" id="PRO_0000129894" description="Small ribosomal subunit protein uS19">
    <location>
        <begin position="2"/>
        <end position="92"/>
    </location>
</feature>
<protein>
    <recommendedName>
        <fullName evidence="2">Small ribosomal subunit protein uS19</fullName>
    </recommendedName>
    <alternativeName>
        <fullName evidence="3">30S ribosomal protein S19</fullName>
    </alternativeName>
</protein>
<reference key="1">
    <citation type="journal article" date="2001" name="Nature">
        <title>Complete genome sequence of Salmonella enterica serovar Typhimurium LT2.</title>
        <authorList>
            <person name="McClelland M."/>
            <person name="Sanderson K.E."/>
            <person name="Spieth J."/>
            <person name="Clifton S.W."/>
            <person name="Latreille P."/>
            <person name="Courtney L."/>
            <person name="Porwollik S."/>
            <person name="Ali J."/>
            <person name="Dante M."/>
            <person name="Du F."/>
            <person name="Hou S."/>
            <person name="Layman D."/>
            <person name="Leonard S."/>
            <person name="Nguyen C."/>
            <person name="Scott K."/>
            <person name="Holmes A."/>
            <person name="Grewal N."/>
            <person name="Mulvaney E."/>
            <person name="Ryan E."/>
            <person name="Sun H."/>
            <person name="Florea L."/>
            <person name="Miller W."/>
            <person name="Stoneking T."/>
            <person name="Nhan M."/>
            <person name="Waterston R."/>
            <person name="Wilson R.K."/>
        </authorList>
    </citation>
    <scope>NUCLEOTIDE SEQUENCE [LARGE SCALE GENOMIC DNA]</scope>
    <source>
        <strain>LT2 / SGSC1412 / ATCC 700720</strain>
    </source>
</reference>
<keyword id="KW-1185">Reference proteome</keyword>
<keyword id="KW-0687">Ribonucleoprotein</keyword>
<keyword id="KW-0689">Ribosomal protein</keyword>
<keyword id="KW-0694">RNA-binding</keyword>
<keyword id="KW-0699">rRNA-binding</keyword>
<name>RS19_SALTY</name>
<accession>P66491</accession>
<accession>Q8XGF2</accession>
<dbReference type="EMBL" id="AE006468">
    <property type="protein sequence ID" value="AAL22299.1"/>
    <property type="molecule type" value="Genomic_DNA"/>
</dbReference>
<dbReference type="RefSeq" id="NP_462340.1">
    <property type="nucleotide sequence ID" value="NC_003197.2"/>
</dbReference>
<dbReference type="RefSeq" id="WP_001138115.1">
    <property type="nucleotide sequence ID" value="NC_003197.2"/>
</dbReference>
<dbReference type="SMR" id="P66491"/>
<dbReference type="STRING" id="99287.STM3436"/>
<dbReference type="PaxDb" id="99287-STM3436"/>
<dbReference type="GeneID" id="1254959"/>
<dbReference type="GeneID" id="97603665"/>
<dbReference type="KEGG" id="stm:STM3436"/>
<dbReference type="PATRIC" id="fig|99287.12.peg.3633"/>
<dbReference type="HOGENOM" id="CLU_144911_0_1_6"/>
<dbReference type="OMA" id="KGPFVDP"/>
<dbReference type="PhylomeDB" id="P66491"/>
<dbReference type="BioCyc" id="SENT99287:STM3436-MONOMER"/>
<dbReference type="PRO" id="PR:P66491"/>
<dbReference type="Proteomes" id="UP000001014">
    <property type="component" value="Chromosome"/>
</dbReference>
<dbReference type="GO" id="GO:0005737">
    <property type="term" value="C:cytoplasm"/>
    <property type="evidence" value="ECO:0007669"/>
    <property type="project" value="UniProtKB-ARBA"/>
</dbReference>
<dbReference type="GO" id="GO:0015935">
    <property type="term" value="C:small ribosomal subunit"/>
    <property type="evidence" value="ECO:0007669"/>
    <property type="project" value="InterPro"/>
</dbReference>
<dbReference type="GO" id="GO:0019843">
    <property type="term" value="F:rRNA binding"/>
    <property type="evidence" value="ECO:0007669"/>
    <property type="project" value="UniProtKB-UniRule"/>
</dbReference>
<dbReference type="GO" id="GO:0003735">
    <property type="term" value="F:structural constituent of ribosome"/>
    <property type="evidence" value="ECO:0000318"/>
    <property type="project" value="GO_Central"/>
</dbReference>
<dbReference type="GO" id="GO:0000028">
    <property type="term" value="P:ribosomal small subunit assembly"/>
    <property type="evidence" value="ECO:0000318"/>
    <property type="project" value="GO_Central"/>
</dbReference>
<dbReference type="GO" id="GO:0006412">
    <property type="term" value="P:translation"/>
    <property type="evidence" value="ECO:0007669"/>
    <property type="project" value="UniProtKB-UniRule"/>
</dbReference>
<dbReference type="FunFam" id="3.30.860.10:FF:000001">
    <property type="entry name" value="30S ribosomal protein S19"/>
    <property type="match status" value="1"/>
</dbReference>
<dbReference type="Gene3D" id="3.30.860.10">
    <property type="entry name" value="30s Ribosomal Protein S19, Chain A"/>
    <property type="match status" value="1"/>
</dbReference>
<dbReference type="HAMAP" id="MF_00531">
    <property type="entry name" value="Ribosomal_uS19"/>
    <property type="match status" value="1"/>
</dbReference>
<dbReference type="InterPro" id="IPR002222">
    <property type="entry name" value="Ribosomal_uS19"/>
</dbReference>
<dbReference type="InterPro" id="IPR005732">
    <property type="entry name" value="Ribosomal_uS19_bac-type"/>
</dbReference>
<dbReference type="InterPro" id="IPR020934">
    <property type="entry name" value="Ribosomal_uS19_CS"/>
</dbReference>
<dbReference type="InterPro" id="IPR023575">
    <property type="entry name" value="Ribosomal_uS19_SF"/>
</dbReference>
<dbReference type="NCBIfam" id="TIGR01050">
    <property type="entry name" value="rpsS_bact"/>
    <property type="match status" value="1"/>
</dbReference>
<dbReference type="PANTHER" id="PTHR11880">
    <property type="entry name" value="RIBOSOMAL PROTEIN S19P FAMILY MEMBER"/>
    <property type="match status" value="1"/>
</dbReference>
<dbReference type="PANTHER" id="PTHR11880:SF8">
    <property type="entry name" value="SMALL RIBOSOMAL SUBUNIT PROTEIN US19M"/>
    <property type="match status" value="1"/>
</dbReference>
<dbReference type="Pfam" id="PF00203">
    <property type="entry name" value="Ribosomal_S19"/>
    <property type="match status" value="1"/>
</dbReference>
<dbReference type="PIRSF" id="PIRSF002144">
    <property type="entry name" value="Ribosomal_S19"/>
    <property type="match status" value="1"/>
</dbReference>
<dbReference type="PRINTS" id="PR00975">
    <property type="entry name" value="RIBOSOMALS19"/>
</dbReference>
<dbReference type="SUPFAM" id="SSF54570">
    <property type="entry name" value="Ribosomal protein S19"/>
    <property type="match status" value="1"/>
</dbReference>
<dbReference type="PROSITE" id="PS00323">
    <property type="entry name" value="RIBOSOMAL_S19"/>
    <property type="match status" value="1"/>
</dbReference>
<organism>
    <name type="scientific">Salmonella typhimurium (strain LT2 / SGSC1412 / ATCC 700720)</name>
    <dbReference type="NCBI Taxonomy" id="99287"/>
    <lineage>
        <taxon>Bacteria</taxon>
        <taxon>Pseudomonadati</taxon>
        <taxon>Pseudomonadota</taxon>
        <taxon>Gammaproteobacteria</taxon>
        <taxon>Enterobacterales</taxon>
        <taxon>Enterobacteriaceae</taxon>
        <taxon>Salmonella</taxon>
    </lineage>
</organism>
<gene>
    <name evidence="2" type="primary">rpsS</name>
    <name type="ordered locus">STM3436</name>
</gene>
<evidence type="ECO:0000250" key="1"/>
<evidence type="ECO:0000255" key="2">
    <source>
        <dbReference type="HAMAP-Rule" id="MF_00531"/>
    </source>
</evidence>
<evidence type="ECO:0000305" key="3"/>